<sequence>MSEKINTKPFILHSDFRPSGDQPQAIEKLAENLTDGLAHQTLLGVTGSGKTFTIANVIAQLNRPAMLLAPNKTLAAQLYAEMKAFFPENAVEYFVSYYDYYQPEAYVPSSDTFIEKDASINDQIEQMRLSATKSFLERRDTIVVASVSAIYGLGDPDSYLQMMLHLQQGAIIDQRQILAKLAELQYTRNDQAFQRGTFRVRGEIIDIFPAESDDRAVRIELFDDEIERLSLFDPLTGSSFGAVPRFTIYPKTHYVTPRERILDAIENIKKELVSRREYFIKEHKLLEEQRISQRTQFDIEMMNELGYCSGIENYSRYLSGRNEGEPPPTLFDYMPPDAILIIDESHVTVPQIGGMYRGDRSRKETLVEYGFRLPSALDNRPLRFEEFERLAPQTIYVSATPGAYELEKSGSEIIDQVVRPTGLLDPLIEIRPVSIQVDDLLSEARQRADKNERVLVTTLTKKMAEDLTDYLDEHGIRVRYLHSDIDTVERVEIIRDLRLGEFDVLVGINLLREGLDIPEVSLVAILDADKEGFLRSERSLIQTIGRAARNLNGKAILYADSITKSMEKAITETNRRREKQTKYNEEHGIVPQALNKKVGELLDIGQGANQKAKANKQRGKMAAEPTALYNAPKNAKEYQQQIKKLEQQMYKFAQDLEFEKAAAIRDQLHQLREQFVFDN</sequence>
<organism>
    <name type="scientific">Haemophilus influenzae (strain ATCC 51907 / DSM 11121 / KW20 / Rd)</name>
    <dbReference type="NCBI Taxonomy" id="71421"/>
    <lineage>
        <taxon>Bacteria</taxon>
        <taxon>Pseudomonadati</taxon>
        <taxon>Pseudomonadota</taxon>
        <taxon>Gammaproteobacteria</taxon>
        <taxon>Pasteurellales</taxon>
        <taxon>Pasteurellaceae</taxon>
        <taxon>Haemophilus</taxon>
    </lineage>
</organism>
<protein>
    <recommendedName>
        <fullName evidence="1">UvrABC system protein B</fullName>
        <shortName evidence="1">Protein UvrB</shortName>
    </recommendedName>
    <alternativeName>
        <fullName evidence="1">Excinuclease ABC subunit B</fullName>
    </alternativeName>
</protein>
<reference key="1">
    <citation type="journal article" date="1995" name="Science">
        <title>Whole-genome random sequencing and assembly of Haemophilus influenzae Rd.</title>
        <authorList>
            <person name="Fleischmann R.D."/>
            <person name="Adams M.D."/>
            <person name="White O."/>
            <person name="Clayton R.A."/>
            <person name="Kirkness E.F."/>
            <person name="Kerlavage A.R."/>
            <person name="Bult C.J."/>
            <person name="Tomb J.-F."/>
            <person name="Dougherty B.A."/>
            <person name="Merrick J.M."/>
            <person name="McKenney K."/>
            <person name="Sutton G.G."/>
            <person name="FitzHugh W."/>
            <person name="Fields C.A."/>
            <person name="Gocayne J.D."/>
            <person name="Scott J.D."/>
            <person name="Shirley R."/>
            <person name="Liu L.-I."/>
            <person name="Glodek A."/>
            <person name="Kelley J.M."/>
            <person name="Weidman J.F."/>
            <person name="Phillips C.A."/>
            <person name="Spriggs T."/>
            <person name="Hedblom E."/>
            <person name="Cotton M.D."/>
            <person name="Utterback T.R."/>
            <person name="Hanna M.C."/>
            <person name="Nguyen D.T."/>
            <person name="Saudek D.M."/>
            <person name="Brandon R.C."/>
            <person name="Fine L.D."/>
            <person name="Fritchman J.L."/>
            <person name="Fuhrmann J.L."/>
            <person name="Geoghagen N.S.M."/>
            <person name="Gnehm C.L."/>
            <person name="McDonald L.A."/>
            <person name="Small K.V."/>
            <person name="Fraser C.M."/>
            <person name="Smith H.O."/>
            <person name="Venter J.C."/>
        </authorList>
    </citation>
    <scope>NUCLEOTIDE SEQUENCE [LARGE SCALE GENOMIC DNA]</scope>
    <source>
        <strain>ATCC 51907 / DSM 11121 / KW20 / Rd</strain>
    </source>
</reference>
<dbReference type="EMBL" id="L42023">
    <property type="protein sequence ID" value="AAC22897.1"/>
    <property type="molecule type" value="Genomic_DNA"/>
</dbReference>
<dbReference type="PIR" id="G64112">
    <property type="entry name" value="G64112"/>
</dbReference>
<dbReference type="RefSeq" id="NP_439403.1">
    <property type="nucleotide sequence ID" value="NC_000907.1"/>
</dbReference>
<dbReference type="SMR" id="P45125"/>
<dbReference type="STRING" id="71421.HI_1247"/>
<dbReference type="EnsemblBacteria" id="AAC22897">
    <property type="protein sequence ID" value="AAC22897"/>
    <property type="gene ID" value="HI_1247"/>
</dbReference>
<dbReference type="KEGG" id="hin:HI_1247"/>
<dbReference type="PATRIC" id="fig|71421.8.peg.1299"/>
<dbReference type="eggNOG" id="COG0556">
    <property type="taxonomic scope" value="Bacteria"/>
</dbReference>
<dbReference type="HOGENOM" id="CLU_009621_2_1_6"/>
<dbReference type="OrthoDB" id="9806651at2"/>
<dbReference type="PhylomeDB" id="P45125"/>
<dbReference type="BioCyc" id="HINF71421:G1GJ1-1277-MONOMER"/>
<dbReference type="Proteomes" id="UP000000579">
    <property type="component" value="Chromosome"/>
</dbReference>
<dbReference type="GO" id="GO:0005737">
    <property type="term" value="C:cytoplasm"/>
    <property type="evidence" value="ECO:0007669"/>
    <property type="project" value="UniProtKB-SubCell"/>
</dbReference>
<dbReference type="GO" id="GO:0009380">
    <property type="term" value="C:excinuclease repair complex"/>
    <property type="evidence" value="ECO:0000318"/>
    <property type="project" value="GO_Central"/>
</dbReference>
<dbReference type="GO" id="GO:0005524">
    <property type="term" value="F:ATP binding"/>
    <property type="evidence" value="ECO:0007669"/>
    <property type="project" value="UniProtKB-UniRule"/>
</dbReference>
<dbReference type="GO" id="GO:0016887">
    <property type="term" value="F:ATP hydrolysis activity"/>
    <property type="evidence" value="ECO:0007669"/>
    <property type="project" value="InterPro"/>
</dbReference>
<dbReference type="GO" id="GO:0003677">
    <property type="term" value="F:DNA binding"/>
    <property type="evidence" value="ECO:0007669"/>
    <property type="project" value="UniProtKB-UniRule"/>
</dbReference>
<dbReference type="GO" id="GO:0009381">
    <property type="term" value="F:excinuclease ABC activity"/>
    <property type="evidence" value="ECO:0007669"/>
    <property type="project" value="UniProtKB-UniRule"/>
</dbReference>
<dbReference type="GO" id="GO:0000715">
    <property type="term" value="P:nucleotide-excision repair, DNA damage recognition"/>
    <property type="evidence" value="ECO:0000318"/>
    <property type="project" value="GO_Central"/>
</dbReference>
<dbReference type="GO" id="GO:0009432">
    <property type="term" value="P:SOS response"/>
    <property type="evidence" value="ECO:0007669"/>
    <property type="project" value="UniProtKB-UniRule"/>
</dbReference>
<dbReference type="CDD" id="cd17916">
    <property type="entry name" value="DEXHc_UvrB"/>
    <property type="match status" value="1"/>
</dbReference>
<dbReference type="CDD" id="cd18790">
    <property type="entry name" value="SF2_C_UvrB"/>
    <property type="match status" value="1"/>
</dbReference>
<dbReference type="FunFam" id="3.40.50.300:FF:000257">
    <property type="entry name" value="UvrABC system protein B"/>
    <property type="match status" value="1"/>
</dbReference>
<dbReference type="FunFam" id="3.40.50.300:FF:000477">
    <property type="entry name" value="UvrABC system protein B"/>
    <property type="match status" value="1"/>
</dbReference>
<dbReference type="Gene3D" id="3.40.50.300">
    <property type="entry name" value="P-loop containing nucleotide triphosphate hydrolases"/>
    <property type="match status" value="3"/>
</dbReference>
<dbReference type="Gene3D" id="4.10.860.10">
    <property type="entry name" value="UVR domain"/>
    <property type="match status" value="1"/>
</dbReference>
<dbReference type="HAMAP" id="MF_00204">
    <property type="entry name" value="UvrB"/>
    <property type="match status" value="1"/>
</dbReference>
<dbReference type="InterPro" id="IPR006935">
    <property type="entry name" value="Helicase/UvrB_N"/>
</dbReference>
<dbReference type="InterPro" id="IPR014001">
    <property type="entry name" value="Helicase_ATP-bd"/>
</dbReference>
<dbReference type="InterPro" id="IPR001650">
    <property type="entry name" value="Helicase_C-like"/>
</dbReference>
<dbReference type="InterPro" id="IPR027417">
    <property type="entry name" value="P-loop_NTPase"/>
</dbReference>
<dbReference type="InterPro" id="IPR001943">
    <property type="entry name" value="UVR_dom"/>
</dbReference>
<dbReference type="InterPro" id="IPR036876">
    <property type="entry name" value="UVR_dom_sf"/>
</dbReference>
<dbReference type="InterPro" id="IPR004807">
    <property type="entry name" value="UvrB"/>
</dbReference>
<dbReference type="InterPro" id="IPR041471">
    <property type="entry name" value="UvrB_inter"/>
</dbReference>
<dbReference type="InterPro" id="IPR024759">
    <property type="entry name" value="UvrB_YAD/RRR_dom"/>
</dbReference>
<dbReference type="NCBIfam" id="NF003673">
    <property type="entry name" value="PRK05298.1"/>
    <property type="match status" value="1"/>
</dbReference>
<dbReference type="NCBIfam" id="TIGR00631">
    <property type="entry name" value="uvrb"/>
    <property type="match status" value="1"/>
</dbReference>
<dbReference type="PANTHER" id="PTHR24029">
    <property type="entry name" value="UVRABC SYSTEM PROTEIN B"/>
    <property type="match status" value="1"/>
</dbReference>
<dbReference type="PANTHER" id="PTHR24029:SF0">
    <property type="entry name" value="UVRABC SYSTEM PROTEIN B"/>
    <property type="match status" value="1"/>
</dbReference>
<dbReference type="Pfam" id="PF00271">
    <property type="entry name" value="Helicase_C"/>
    <property type="match status" value="1"/>
</dbReference>
<dbReference type="Pfam" id="PF04851">
    <property type="entry name" value="ResIII"/>
    <property type="match status" value="1"/>
</dbReference>
<dbReference type="Pfam" id="PF02151">
    <property type="entry name" value="UVR"/>
    <property type="match status" value="1"/>
</dbReference>
<dbReference type="Pfam" id="PF12344">
    <property type="entry name" value="UvrB"/>
    <property type="match status" value="1"/>
</dbReference>
<dbReference type="Pfam" id="PF17757">
    <property type="entry name" value="UvrB_inter"/>
    <property type="match status" value="1"/>
</dbReference>
<dbReference type="SMART" id="SM00487">
    <property type="entry name" value="DEXDc"/>
    <property type="match status" value="1"/>
</dbReference>
<dbReference type="SMART" id="SM00490">
    <property type="entry name" value="HELICc"/>
    <property type="match status" value="1"/>
</dbReference>
<dbReference type="SUPFAM" id="SSF46600">
    <property type="entry name" value="C-terminal UvrC-binding domain of UvrB"/>
    <property type="match status" value="1"/>
</dbReference>
<dbReference type="SUPFAM" id="SSF52540">
    <property type="entry name" value="P-loop containing nucleoside triphosphate hydrolases"/>
    <property type="match status" value="2"/>
</dbReference>
<dbReference type="PROSITE" id="PS51192">
    <property type="entry name" value="HELICASE_ATP_BIND_1"/>
    <property type="match status" value="1"/>
</dbReference>
<dbReference type="PROSITE" id="PS51194">
    <property type="entry name" value="HELICASE_CTER"/>
    <property type="match status" value="1"/>
</dbReference>
<dbReference type="PROSITE" id="PS50151">
    <property type="entry name" value="UVR"/>
    <property type="match status" value="1"/>
</dbReference>
<proteinExistence type="inferred from homology"/>
<evidence type="ECO:0000255" key="1">
    <source>
        <dbReference type="HAMAP-Rule" id="MF_00204"/>
    </source>
</evidence>
<keyword id="KW-0067">ATP-binding</keyword>
<keyword id="KW-0963">Cytoplasm</keyword>
<keyword id="KW-0227">DNA damage</keyword>
<keyword id="KW-0228">DNA excision</keyword>
<keyword id="KW-0234">DNA repair</keyword>
<keyword id="KW-0267">Excision nuclease</keyword>
<keyword id="KW-0547">Nucleotide-binding</keyword>
<keyword id="KW-1185">Reference proteome</keyword>
<keyword id="KW-0742">SOS response</keyword>
<accession>P45125</accession>
<gene>
    <name evidence="1" type="primary">uvrB</name>
    <name type="ordered locus">HI_1247</name>
</gene>
<feature type="chain" id="PRO_0000138395" description="UvrABC system protein B">
    <location>
        <begin position="1"/>
        <end position="679"/>
    </location>
</feature>
<feature type="domain" description="Helicase ATP-binding" evidence="1">
    <location>
        <begin position="31"/>
        <end position="414"/>
    </location>
</feature>
<feature type="domain" description="Helicase C-terminal" evidence="1">
    <location>
        <begin position="436"/>
        <end position="589"/>
    </location>
</feature>
<feature type="domain" description="UVR" evidence="1">
    <location>
        <begin position="639"/>
        <end position="674"/>
    </location>
</feature>
<feature type="short sequence motif" description="Beta-hairpin">
    <location>
        <begin position="97"/>
        <end position="120"/>
    </location>
</feature>
<feature type="binding site" evidence="1">
    <location>
        <begin position="44"/>
        <end position="51"/>
    </location>
    <ligand>
        <name>ATP</name>
        <dbReference type="ChEBI" id="CHEBI:30616"/>
    </ligand>
</feature>
<comment type="function">
    <text evidence="1">The UvrABC repair system catalyzes the recognition and processing of DNA lesions. A damage recognition complex composed of 2 UvrA and 2 UvrB subunits scans DNA for abnormalities. Upon binding of the UvrA(2)B(2) complex to a putative damaged site, the DNA wraps around one UvrB monomer. DNA wrap is dependent on ATP binding by UvrB and probably causes local melting of the DNA helix, facilitating insertion of UvrB beta-hairpin between the DNA strands. Then UvrB probes one DNA strand for the presence of a lesion. If a lesion is found the UvrA subunits dissociate and the UvrB-DNA preincision complex is formed. This complex is subsequently bound by UvrC and the second UvrB is released. If no lesion is found, the DNA wraps around the other UvrB subunit that will check the other stand for damage.</text>
</comment>
<comment type="subunit">
    <text evidence="1">Forms a heterotetramer with UvrA during the search for lesions. Interacts with UvrC in an incision complex.</text>
</comment>
<comment type="subcellular location">
    <subcellularLocation>
        <location evidence="1">Cytoplasm</location>
    </subcellularLocation>
</comment>
<comment type="domain">
    <text evidence="1">The beta-hairpin motif is involved in DNA binding.</text>
</comment>
<comment type="similarity">
    <text evidence="1">Belongs to the UvrB family.</text>
</comment>
<name>UVRB_HAEIN</name>